<comment type="subcellular location">
    <subcellularLocation>
        <location evidence="1">Endosome membrane</location>
        <topology evidence="3">Multi-pass membrane protein</topology>
    </subcellularLocation>
    <subcellularLocation>
        <location evidence="2">Golgi apparatus membrane</location>
        <topology evidence="3">Multi-pass membrane protein</topology>
    </subcellularLocation>
</comment>
<comment type="alternative products">
    <event type="alternative splicing"/>
    <isoform>
        <id>F4HW17-1</id>
        <name>1</name>
        <sequence type="displayed"/>
    </isoform>
    <isoform>
        <id>F4HW17-2</id>
        <name>2</name>
        <sequence type="described" ref="VSP_057142"/>
    </isoform>
</comment>
<comment type="tissue specificity">
    <text evidence="4">Expressed in the root cap and in giant cells.</text>
</comment>
<comment type="induction">
    <text evidence="4">Up-regulated upon nematode infection.</text>
</comment>
<comment type="domain">
    <text evidence="2">The C-terminal KXD/E motif functions as a Golgi retention signal, certainly through the binding to the COP1 coatomer.</text>
</comment>
<comment type="similarity">
    <text>Belongs to the nonaspanin (TM9SF) (TC 9.A.2) family.</text>
</comment>
<comment type="sequence caution" evidence="7">
    <conflict type="erroneous gene model prediction">
        <sequence resource="EMBL-CDS" id="AAF22904"/>
    </conflict>
</comment>
<accession>F4HW17</accession>
<accession>F4HW18</accession>
<accession>Q94AV9</accession>
<accession>Q9SCX1</accession>
<accession>Q9SJF5</accession>
<protein>
    <recommendedName>
        <fullName evidence="7">Transmembrane 9 superfamily member 5</fullName>
    </recommendedName>
    <alternativeName>
        <fullName evidence="6">Endomembrane protein 11</fullName>
    </alternativeName>
    <alternativeName>
        <fullName evidence="5">Transmembrane nine protein 5</fullName>
        <shortName evidence="5">AtTMN5</shortName>
    </alternativeName>
</protein>
<organism>
    <name type="scientific">Arabidopsis thaliana</name>
    <name type="common">Mouse-ear cress</name>
    <dbReference type="NCBI Taxonomy" id="3702"/>
    <lineage>
        <taxon>Eukaryota</taxon>
        <taxon>Viridiplantae</taxon>
        <taxon>Streptophyta</taxon>
        <taxon>Embryophyta</taxon>
        <taxon>Tracheophyta</taxon>
        <taxon>Spermatophyta</taxon>
        <taxon>Magnoliopsida</taxon>
        <taxon>eudicotyledons</taxon>
        <taxon>Gunneridae</taxon>
        <taxon>Pentapetalae</taxon>
        <taxon>rosids</taxon>
        <taxon>malvids</taxon>
        <taxon>Brassicales</taxon>
        <taxon>Brassicaceae</taxon>
        <taxon>Camelineae</taxon>
        <taxon>Arabidopsis</taxon>
    </lineage>
</organism>
<name>TMN5_ARATH</name>
<proteinExistence type="evidence at transcript level"/>
<keyword id="KW-0025">Alternative splicing</keyword>
<keyword id="KW-0967">Endosome</keyword>
<keyword id="KW-0333">Golgi apparatus</keyword>
<keyword id="KW-0472">Membrane</keyword>
<keyword id="KW-1185">Reference proteome</keyword>
<keyword id="KW-0732">Signal</keyword>
<keyword id="KW-0812">Transmembrane</keyword>
<keyword id="KW-1133">Transmembrane helix</keyword>
<dbReference type="EMBL" id="AC006932">
    <property type="protein sequence ID" value="AAF22904.1"/>
    <property type="status" value="ALT_SEQ"/>
    <property type="molecule type" value="Genomic_DNA"/>
</dbReference>
<dbReference type="EMBL" id="CP002684">
    <property type="protein sequence ID" value="AEE28279.1"/>
    <property type="molecule type" value="Genomic_DNA"/>
</dbReference>
<dbReference type="EMBL" id="CP002684">
    <property type="protein sequence ID" value="AEE28280.1"/>
    <property type="molecule type" value="Genomic_DNA"/>
</dbReference>
<dbReference type="EMBL" id="CP002684">
    <property type="protein sequence ID" value="ANM60891.1"/>
    <property type="molecule type" value="Genomic_DNA"/>
</dbReference>
<dbReference type="EMBL" id="AY045680">
    <property type="protein sequence ID" value="AAK74038.1"/>
    <property type="molecule type" value="mRNA"/>
</dbReference>
<dbReference type="EMBL" id="BT001044">
    <property type="protein sequence ID" value="AAN46798.1"/>
    <property type="molecule type" value="mRNA"/>
</dbReference>
<dbReference type="EMBL" id="AJ249959">
    <property type="protein sequence ID" value="CAB62549.1"/>
    <property type="molecule type" value="mRNA"/>
</dbReference>
<dbReference type="RefSeq" id="NP_001077489.1">
    <molecule id="F4HW17-1"/>
    <property type="nucleotide sequence ID" value="NM_001084020.1"/>
</dbReference>
<dbReference type="RefSeq" id="NP_001323140.1">
    <property type="nucleotide sequence ID" value="NM_001331772.1"/>
</dbReference>
<dbReference type="RefSeq" id="NP_001323141.1">
    <molecule id="F4HW17-1"/>
    <property type="nucleotide sequence ID" value="NM_001331771.1"/>
</dbReference>
<dbReference type="RefSeq" id="NP_563812.1">
    <molecule id="F4HW17-2"/>
    <property type="nucleotide sequence ID" value="NM_100708.2"/>
</dbReference>
<dbReference type="SMR" id="F4HW17"/>
<dbReference type="FunCoup" id="F4HW17">
    <property type="interactions" value="3128"/>
</dbReference>
<dbReference type="STRING" id="3702.F4HW17"/>
<dbReference type="PaxDb" id="3702-AT1G08350.2"/>
<dbReference type="EnsemblPlants" id="AT1G08350.1">
    <molecule id="F4HW17-2"/>
    <property type="protein sequence ID" value="AT1G08350.1"/>
    <property type="gene ID" value="AT1G08350"/>
</dbReference>
<dbReference type="EnsemblPlants" id="AT1G08350.2">
    <molecule id="F4HW17-1"/>
    <property type="protein sequence ID" value="AT1G08350.2"/>
    <property type="gene ID" value="AT1G08350"/>
</dbReference>
<dbReference type="EnsemblPlants" id="AT1G08350.3">
    <molecule id="F4HW17-1"/>
    <property type="protein sequence ID" value="AT1G08350.3"/>
    <property type="gene ID" value="AT1G08350"/>
</dbReference>
<dbReference type="GeneID" id="837355"/>
<dbReference type="Gramene" id="AT1G08350.1">
    <molecule id="F4HW17-2"/>
    <property type="protein sequence ID" value="AT1G08350.1"/>
    <property type="gene ID" value="AT1G08350"/>
</dbReference>
<dbReference type="Gramene" id="AT1G08350.2">
    <molecule id="F4HW17-1"/>
    <property type="protein sequence ID" value="AT1G08350.2"/>
    <property type="gene ID" value="AT1G08350"/>
</dbReference>
<dbReference type="Gramene" id="AT1G08350.3">
    <molecule id="F4HW17-1"/>
    <property type="protein sequence ID" value="AT1G08350.3"/>
    <property type="gene ID" value="AT1G08350"/>
</dbReference>
<dbReference type="KEGG" id="ath:AT1G08350"/>
<dbReference type="Araport" id="AT1G08350"/>
<dbReference type="TAIR" id="AT1G08350"/>
<dbReference type="eggNOG" id="KOG1277">
    <property type="taxonomic scope" value="Eukaryota"/>
</dbReference>
<dbReference type="HOGENOM" id="CLU_010714_0_2_1"/>
<dbReference type="InParanoid" id="F4HW17"/>
<dbReference type="OMA" id="NACLCYA"/>
<dbReference type="PRO" id="PR:F4HW17"/>
<dbReference type="Proteomes" id="UP000006548">
    <property type="component" value="Chromosome 1"/>
</dbReference>
<dbReference type="ExpressionAtlas" id="F4HW17">
    <property type="expression patterns" value="baseline and differential"/>
</dbReference>
<dbReference type="GO" id="GO:0010008">
    <property type="term" value="C:endosome membrane"/>
    <property type="evidence" value="ECO:0007669"/>
    <property type="project" value="UniProtKB-SubCell"/>
</dbReference>
<dbReference type="GO" id="GO:0000139">
    <property type="term" value="C:Golgi membrane"/>
    <property type="evidence" value="ECO:0007669"/>
    <property type="project" value="UniProtKB-SubCell"/>
</dbReference>
<dbReference type="GO" id="GO:0009624">
    <property type="term" value="P:response to nematode"/>
    <property type="evidence" value="ECO:0000270"/>
    <property type="project" value="UniProtKB"/>
</dbReference>
<dbReference type="InterPro" id="IPR004240">
    <property type="entry name" value="EMP70"/>
</dbReference>
<dbReference type="PANTHER" id="PTHR10766:SF119">
    <property type="entry name" value="TRANSMEMBRANE 9 SUPERFAMILY MEMBER 5"/>
    <property type="match status" value="1"/>
</dbReference>
<dbReference type="PANTHER" id="PTHR10766">
    <property type="entry name" value="TRANSMEMBRANE 9 SUPERFAMILY PROTEIN"/>
    <property type="match status" value="1"/>
</dbReference>
<dbReference type="Pfam" id="PF02990">
    <property type="entry name" value="EMP70"/>
    <property type="match status" value="1"/>
</dbReference>
<feature type="signal peptide" evidence="3">
    <location>
        <begin position="1"/>
        <end position="24"/>
    </location>
</feature>
<feature type="chain" id="PRO_0000431262" description="Transmembrane 9 superfamily member 5" evidence="3">
    <location>
        <begin position="25"/>
        <end position="589"/>
    </location>
</feature>
<feature type="topological domain" description="Lumenal" evidence="7">
    <location>
        <begin position="25"/>
        <end position="227"/>
    </location>
</feature>
<feature type="transmembrane region" description="Helical; Name=1" evidence="3">
    <location>
        <begin position="228"/>
        <end position="248"/>
    </location>
</feature>
<feature type="topological domain" description="Cytoplasmic" evidence="7">
    <location>
        <begin position="249"/>
        <end position="291"/>
    </location>
</feature>
<feature type="transmembrane region" description="Helical; Name=2" evidence="3">
    <location>
        <begin position="292"/>
        <end position="312"/>
    </location>
</feature>
<feature type="topological domain" description="Lumenal" evidence="7">
    <location>
        <begin position="313"/>
        <end position="321"/>
    </location>
</feature>
<feature type="transmembrane region" description="Helical; Name=3" evidence="3">
    <location>
        <begin position="322"/>
        <end position="342"/>
    </location>
</feature>
<feature type="topological domain" description="Cytoplasmic" evidence="7">
    <location>
        <begin position="343"/>
        <end position="361"/>
    </location>
</feature>
<feature type="transmembrane region" description="Helical; Name=4" evidence="3">
    <location>
        <begin position="362"/>
        <end position="382"/>
    </location>
</feature>
<feature type="topological domain" description="Lumenal" evidence="7">
    <location>
        <begin position="383"/>
        <end position="394"/>
    </location>
</feature>
<feature type="transmembrane region" description="Helical; Name=5" evidence="3">
    <location>
        <begin position="395"/>
        <end position="415"/>
    </location>
</feature>
<feature type="topological domain" description="Cytoplasmic" evidence="7">
    <location>
        <begin position="416"/>
        <end position="450"/>
    </location>
</feature>
<feature type="transmembrane region" description="Helical; Name=6" evidence="3">
    <location>
        <begin position="451"/>
        <end position="471"/>
    </location>
</feature>
<feature type="topological domain" description="Lumenal" evidence="7">
    <location>
        <begin position="472"/>
        <end position="482"/>
    </location>
</feature>
<feature type="transmembrane region" description="Helical; Name=7" evidence="3">
    <location>
        <begin position="483"/>
        <end position="503"/>
    </location>
</feature>
<feature type="topological domain" description="Cytoplasmic" evidence="7">
    <location>
        <begin position="504"/>
        <end position="518"/>
    </location>
</feature>
<feature type="transmembrane region" description="Helical; Name=8" evidence="3">
    <location>
        <begin position="519"/>
        <end position="539"/>
    </location>
</feature>
<feature type="topological domain" description="Lumenal" evidence="7">
    <location>
        <begin position="540"/>
        <end position="550"/>
    </location>
</feature>
<feature type="transmembrane region" description="Helical; Name=9" evidence="3">
    <location>
        <begin position="551"/>
        <end position="571"/>
    </location>
</feature>
<feature type="topological domain" description="Cytoplasmic" evidence="7">
    <location>
        <begin position="572"/>
        <end position="589"/>
    </location>
</feature>
<feature type="short sequence motif" description="Endoplasmic reticulum export signal" evidence="2">
    <location>
        <begin position="578"/>
        <end position="583"/>
    </location>
</feature>
<feature type="short sequence motif" description="Golgi retention signal" evidence="2">
    <location>
        <begin position="587"/>
        <end position="589"/>
    </location>
</feature>
<feature type="splice variant" id="VSP_057142" description="In isoform 2.">
    <location>
        <begin position="1"/>
        <end position="81"/>
    </location>
</feature>
<feature type="sequence conflict" description="In Ref. 3; AAK74038/AAN46798." ref="3">
    <original>I</original>
    <variation>V</variation>
    <location>
        <position position="582"/>
    </location>
</feature>
<reference key="1">
    <citation type="journal article" date="2000" name="Nature">
        <title>Sequence and analysis of chromosome 1 of the plant Arabidopsis thaliana.</title>
        <authorList>
            <person name="Theologis A."/>
            <person name="Ecker J.R."/>
            <person name="Palm C.J."/>
            <person name="Federspiel N.A."/>
            <person name="Kaul S."/>
            <person name="White O."/>
            <person name="Alonso J."/>
            <person name="Altafi H."/>
            <person name="Araujo R."/>
            <person name="Bowman C.L."/>
            <person name="Brooks S.Y."/>
            <person name="Buehler E."/>
            <person name="Chan A."/>
            <person name="Chao Q."/>
            <person name="Chen H."/>
            <person name="Cheuk R.F."/>
            <person name="Chin C.W."/>
            <person name="Chung M.K."/>
            <person name="Conn L."/>
            <person name="Conway A.B."/>
            <person name="Conway A.R."/>
            <person name="Creasy T.H."/>
            <person name="Dewar K."/>
            <person name="Dunn P."/>
            <person name="Etgu P."/>
            <person name="Feldblyum T.V."/>
            <person name="Feng J.-D."/>
            <person name="Fong B."/>
            <person name="Fujii C.Y."/>
            <person name="Gill J.E."/>
            <person name="Goldsmith A.D."/>
            <person name="Haas B."/>
            <person name="Hansen N.F."/>
            <person name="Hughes B."/>
            <person name="Huizar L."/>
            <person name="Hunter J.L."/>
            <person name="Jenkins J."/>
            <person name="Johnson-Hopson C."/>
            <person name="Khan S."/>
            <person name="Khaykin E."/>
            <person name="Kim C.J."/>
            <person name="Koo H.L."/>
            <person name="Kremenetskaia I."/>
            <person name="Kurtz D.B."/>
            <person name="Kwan A."/>
            <person name="Lam B."/>
            <person name="Langin-Hooper S."/>
            <person name="Lee A."/>
            <person name="Lee J.M."/>
            <person name="Lenz C.A."/>
            <person name="Li J.H."/>
            <person name="Li Y.-P."/>
            <person name="Lin X."/>
            <person name="Liu S.X."/>
            <person name="Liu Z.A."/>
            <person name="Luros J.S."/>
            <person name="Maiti R."/>
            <person name="Marziali A."/>
            <person name="Militscher J."/>
            <person name="Miranda M."/>
            <person name="Nguyen M."/>
            <person name="Nierman W.C."/>
            <person name="Osborne B.I."/>
            <person name="Pai G."/>
            <person name="Peterson J."/>
            <person name="Pham P.K."/>
            <person name="Rizzo M."/>
            <person name="Rooney T."/>
            <person name="Rowley D."/>
            <person name="Sakano H."/>
            <person name="Salzberg S.L."/>
            <person name="Schwartz J.R."/>
            <person name="Shinn P."/>
            <person name="Southwick A.M."/>
            <person name="Sun H."/>
            <person name="Tallon L.J."/>
            <person name="Tambunga G."/>
            <person name="Toriumi M.J."/>
            <person name="Town C.D."/>
            <person name="Utterback T."/>
            <person name="Van Aken S."/>
            <person name="Vaysberg M."/>
            <person name="Vysotskaia V.S."/>
            <person name="Walker M."/>
            <person name="Wu D."/>
            <person name="Yu G."/>
            <person name="Fraser C.M."/>
            <person name="Venter J.C."/>
            <person name="Davis R.W."/>
        </authorList>
    </citation>
    <scope>NUCLEOTIDE SEQUENCE [LARGE SCALE GENOMIC DNA]</scope>
    <source>
        <strain>cv. Columbia</strain>
    </source>
</reference>
<reference key="2">
    <citation type="journal article" date="2017" name="Plant J.">
        <title>Araport11: a complete reannotation of the Arabidopsis thaliana reference genome.</title>
        <authorList>
            <person name="Cheng C.Y."/>
            <person name="Krishnakumar V."/>
            <person name="Chan A.P."/>
            <person name="Thibaud-Nissen F."/>
            <person name="Schobel S."/>
            <person name="Town C.D."/>
        </authorList>
    </citation>
    <scope>GENOME REANNOTATION</scope>
    <source>
        <strain>cv. Columbia</strain>
    </source>
</reference>
<reference key="3">
    <citation type="journal article" date="2003" name="Science">
        <title>Empirical analysis of transcriptional activity in the Arabidopsis genome.</title>
        <authorList>
            <person name="Yamada K."/>
            <person name="Lim J."/>
            <person name="Dale J.M."/>
            <person name="Chen H."/>
            <person name="Shinn P."/>
            <person name="Palm C.J."/>
            <person name="Southwick A.M."/>
            <person name="Wu H.C."/>
            <person name="Kim C.J."/>
            <person name="Nguyen M."/>
            <person name="Pham P.K."/>
            <person name="Cheuk R.F."/>
            <person name="Karlin-Newmann G."/>
            <person name="Liu S.X."/>
            <person name="Lam B."/>
            <person name="Sakano H."/>
            <person name="Wu T."/>
            <person name="Yu G."/>
            <person name="Miranda M."/>
            <person name="Quach H.L."/>
            <person name="Tripp M."/>
            <person name="Chang C.H."/>
            <person name="Lee J.M."/>
            <person name="Toriumi M.J."/>
            <person name="Chan M.M."/>
            <person name="Tang C.C."/>
            <person name="Onodera C.S."/>
            <person name="Deng J.M."/>
            <person name="Akiyama K."/>
            <person name="Ansari Y."/>
            <person name="Arakawa T."/>
            <person name="Banh J."/>
            <person name="Banno F."/>
            <person name="Bowser L."/>
            <person name="Brooks S.Y."/>
            <person name="Carninci P."/>
            <person name="Chao Q."/>
            <person name="Choy N."/>
            <person name="Enju A."/>
            <person name="Goldsmith A.D."/>
            <person name="Gurjal M."/>
            <person name="Hansen N.F."/>
            <person name="Hayashizaki Y."/>
            <person name="Johnson-Hopson C."/>
            <person name="Hsuan V.W."/>
            <person name="Iida K."/>
            <person name="Karnes M."/>
            <person name="Khan S."/>
            <person name="Koesema E."/>
            <person name="Ishida J."/>
            <person name="Jiang P.X."/>
            <person name="Jones T."/>
            <person name="Kawai J."/>
            <person name="Kamiya A."/>
            <person name="Meyers C."/>
            <person name="Nakajima M."/>
            <person name="Narusaka M."/>
            <person name="Seki M."/>
            <person name="Sakurai T."/>
            <person name="Satou M."/>
            <person name="Tamse R."/>
            <person name="Vaysberg M."/>
            <person name="Wallender E.K."/>
            <person name="Wong C."/>
            <person name="Yamamura Y."/>
            <person name="Yuan S."/>
            <person name="Shinozaki K."/>
            <person name="Davis R.W."/>
            <person name="Theologis A."/>
            <person name="Ecker J.R."/>
        </authorList>
    </citation>
    <scope>NUCLEOTIDE SEQUENCE [LARGE SCALE MRNA] (ISOFORM 2)</scope>
    <source>
        <strain>cv. Columbia</strain>
    </source>
</reference>
<reference key="4">
    <citation type="journal article" date="2001" name="Mol. Plant Microbe Interact.">
        <title>Arabidopsis thaliana genes expressed in the early compatible interaction with root-knot nematodes.</title>
        <authorList>
            <person name="Vercauteren I."/>
            <person name="van der Schueren E."/>
            <person name="Van Montagu M."/>
            <person name="Gheysen G."/>
        </authorList>
    </citation>
    <scope>NUCLEOTIDE SEQUENCE [MRNA] OF 524-589 (ISOFORM 1/2)</scope>
    <scope>TISSUE SPECIFICITY</scope>
    <scope>INDUCTION</scope>
    <source>
        <tissue>Root</tissue>
    </source>
</reference>
<reference key="5">
    <citation type="journal article" date="2010" name="Physiol. Plantarum">
        <title>Transmembrane nine proteins in yeast and Arabidopsis affect cellular metal contents without changing vacuolar morphology.</title>
        <authorList>
            <person name="Hegelund J.N."/>
            <person name="Jahn T.P."/>
            <person name="Baekgaard L."/>
            <person name="Palmgren M.G."/>
            <person name="Schjoerring J.K."/>
        </authorList>
    </citation>
    <scope>GENE FAMILY</scope>
    <scope>NOMENCLATURE</scope>
</reference>
<reference key="6">
    <citation type="journal article" date="2012" name="Plant Cell">
        <title>The Golgi-localized Arabidopsis endomembrane protein12 contains both endoplasmic reticulum export and Golgi retention signals at its C terminus.</title>
        <authorList>
            <person name="Gao C."/>
            <person name="Yu C.K."/>
            <person name="Qu S."/>
            <person name="San M.W."/>
            <person name="Li K.Y."/>
            <person name="Lo S.W."/>
            <person name="Jiang L."/>
        </authorList>
    </citation>
    <scope>GENE FAMILY</scope>
    <scope>NOMENCLATURE</scope>
</reference>
<evidence type="ECO:0000250" key="1">
    <source>
        <dbReference type="UniProtKB" id="P32802"/>
    </source>
</evidence>
<evidence type="ECO:0000250" key="2">
    <source>
        <dbReference type="UniProtKB" id="Q940G0"/>
    </source>
</evidence>
<evidence type="ECO:0000255" key="3"/>
<evidence type="ECO:0000269" key="4">
    <source>
    </source>
</evidence>
<evidence type="ECO:0000303" key="5">
    <source>
    </source>
</evidence>
<evidence type="ECO:0000303" key="6">
    <source>
    </source>
</evidence>
<evidence type="ECO:0000305" key="7"/>
<evidence type="ECO:0000312" key="8">
    <source>
        <dbReference type="Araport" id="AT1G08350"/>
    </source>
</evidence>
<evidence type="ECO:0000312" key="9">
    <source>
        <dbReference type="EMBL" id="AAF22904.1"/>
    </source>
</evidence>
<evidence type="ECO:0000312" key="10">
    <source>
        <dbReference type="EMBL" id="CAB62549.1"/>
    </source>
</evidence>
<sequence length="589" mass="67678">MAQFLLTVLQVLLALTFWIGIGSGSSNHYNAGDHVPLFVNKVGPLHNPSETYQYYDLPFCRRGPVIEKQETLGEVLNGDRLMSSLYKLKFREDKTHFVLCRKRLTSSDIARFRDIIAQDYYFQMYYDDLPLWGFVGKVEGDYFGQGEKHTKYYIFSHLKFNVLYNADKVIEINSFSDPSYMVDISENTEIDVQFTYSVSWNLTSERSETRMNKYSRASFHPISQKIHFFSFLNSITVVVLLIGLISFLFMRHLKNELRSYSIGDEEERKEAGWKLVHSDVFRCPRNISWLCAILGTGTQLLILIIALFALAFTGFLYPYNRGMLLTSLVIMYTLTSIVAGYTSTSFHSQFEGNKQKRSVRLAGILYPVPFFIILSVLNTVAITYGATAALPFGTIVIIILIFTLLNIPFLMLGGVLGNRFGLLEFQPPSAVKRNPREIPPQNWYRRKLYQVFLGGFVPFSAVVLEWHQLYASLWGFKIYTSPGIMLFTFIVLIFLSSSVGIILTYIQLSGEDHEWWWRSILCGGFTAVFMYGYGVLFYLRSDMTGFLQLSFYLGYTALLCYALFLVLGTISFLASLMFIRHIYRSVKLE</sequence>
<gene>
    <name evidence="5" type="primary">TMN5</name>
    <name evidence="10" type="synonym">DIDI 8C-5D</name>
    <name evidence="6" type="synonym">EMP11</name>
    <name evidence="8" type="ordered locus">At1g08350</name>
    <name evidence="9" type="ORF">T27G7.5</name>
</gene>